<evidence type="ECO:0000255" key="1">
    <source>
        <dbReference type="HAMAP-Rule" id="MF_00406"/>
    </source>
</evidence>
<name>FABZ_STAAW</name>
<gene>
    <name evidence="1" type="primary">fabZ</name>
    <name type="ordered locus">MW2023</name>
</gene>
<proteinExistence type="inferred from homology"/>
<feature type="chain" id="PRO_0000091735" description="3-hydroxyacyl-[acyl-carrier-protein] dehydratase FabZ">
    <location>
        <begin position="1"/>
        <end position="146"/>
    </location>
</feature>
<feature type="active site" evidence="1">
    <location>
        <position position="51"/>
    </location>
</feature>
<reference key="1">
    <citation type="journal article" date="2002" name="Lancet">
        <title>Genome and virulence determinants of high virulence community-acquired MRSA.</title>
        <authorList>
            <person name="Baba T."/>
            <person name="Takeuchi F."/>
            <person name="Kuroda M."/>
            <person name="Yuzawa H."/>
            <person name="Aoki K."/>
            <person name="Oguchi A."/>
            <person name="Nagai Y."/>
            <person name="Iwama N."/>
            <person name="Asano K."/>
            <person name="Naimi T."/>
            <person name="Kuroda H."/>
            <person name="Cui L."/>
            <person name="Yamamoto K."/>
            <person name="Hiramatsu K."/>
        </authorList>
    </citation>
    <scope>NUCLEOTIDE SEQUENCE [LARGE SCALE GENOMIC DNA]</scope>
    <source>
        <strain>MW2</strain>
    </source>
</reference>
<keyword id="KW-0963">Cytoplasm</keyword>
<keyword id="KW-0441">Lipid A biosynthesis</keyword>
<keyword id="KW-0444">Lipid biosynthesis</keyword>
<keyword id="KW-0443">Lipid metabolism</keyword>
<keyword id="KW-0456">Lyase</keyword>
<organism>
    <name type="scientific">Staphylococcus aureus (strain MW2)</name>
    <dbReference type="NCBI Taxonomy" id="196620"/>
    <lineage>
        <taxon>Bacteria</taxon>
        <taxon>Bacillati</taxon>
        <taxon>Bacillota</taxon>
        <taxon>Bacilli</taxon>
        <taxon>Bacillales</taxon>
        <taxon>Staphylococcaceae</taxon>
        <taxon>Staphylococcus</taxon>
    </lineage>
</organism>
<comment type="function">
    <text evidence="1">Involved in unsaturated fatty acids biosynthesis. Catalyzes the dehydration of short chain beta-hydroxyacyl-ACPs and long chain saturated and unsaturated beta-hydroxyacyl-ACPs.</text>
</comment>
<comment type="catalytic activity">
    <reaction evidence="1">
        <text>a (3R)-hydroxyacyl-[ACP] = a (2E)-enoyl-[ACP] + H2O</text>
        <dbReference type="Rhea" id="RHEA:13097"/>
        <dbReference type="Rhea" id="RHEA-COMP:9925"/>
        <dbReference type="Rhea" id="RHEA-COMP:9945"/>
        <dbReference type="ChEBI" id="CHEBI:15377"/>
        <dbReference type="ChEBI" id="CHEBI:78784"/>
        <dbReference type="ChEBI" id="CHEBI:78827"/>
        <dbReference type="EC" id="4.2.1.59"/>
    </reaction>
</comment>
<comment type="subcellular location">
    <subcellularLocation>
        <location evidence="1">Cytoplasm</location>
    </subcellularLocation>
</comment>
<comment type="similarity">
    <text evidence="1">Belongs to the thioester dehydratase family. FabZ subfamily.</text>
</comment>
<dbReference type="EC" id="4.2.1.59" evidence="1"/>
<dbReference type="EMBL" id="BA000033">
    <property type="protein sequence ID" value="BAB95888.1"/>
    <property type="molecule type" value="Genomic_DNA"/>
</dbReference>
<dbReference type="RefSeq" id="WP_000447678.1">
    <property type="nucleotide sequence ID" value="NC_003923.1"/>
</dbReference>
<dbReference type="SMR" id="P64109"/>
<dbReference type="KEGG" id="sam:MW2023"/>
<dbReference type="HOGENOM" id="CLU_078912_3_0_9"/>
<dbReference type="GO" id="GO:0005737">
    <property type="term" value="C:cytoplasm"/>
    <property type="evidence" value="ECO:0007669"/>
    <property type="project" value="UniProtKB-SubCell"/>
</dbReference>
<dbReference type="GO" id="GO:0016020">
    <property type="term" value="C:membrane"/>
    <property type="evidence" value="ECO:0007669"/>
    <property type="project" value="GOC"/>
</dbReference>
<dbReference type="GO" id="GO:0019171">
    <property type="term" value="F:(3R)-hydroxyacyl-[acyl-carrier-protein] dehydratase activity"/>
    <property type="evidence" value="ECO:0007669"/>
    <property type="project" value="UniProtKB-EC"/>
</dbReference>
<dbReference type="GO" id="GO:0006633">
    <property type="term" value="P:fatty acid biosynthetic process"/>
    <property type="evidence" value="ECO:0007669"/>
    <property type="project" value="UniProtKB-UniRule"/>
</dbReference>
<dbReference type="GO" id="GO:0009245">
    <property type="term" value="P:lipid A biosynthetic process"/>
    <property type="evidence" value="ECO:0007669"/>
    <property type="project" value="UniProtKB-UniRule"/>
</dbReference>
<dbReference type="CDD" id="cd01288">
    <property type="entry name" value="FabZ"/>
    <property type="match status" value="1"/>
</dbReference>
<dbReference type="FunFam" id="3.10.129.10:FF:000001">
    <property type="entry name" value="3-hydroxyacyl-[acyl-carrier-protein] dehydratase FabZ"/>
    <property type="match status" value="1"/>
</dbReference>
<dbReference type="Gene3D" id="3.10.129.10">
    <property type="entry name" value="Hotdog Thioesterase"/>
    <property type="match status" value="1"/>
</dbReference>
<dbReference type="HAMAP" id="MF_00406">
    <property type="entry name" value="FabZ"/>
    <property type="match status" value="1"/>
</dbReference>
<dbReference type="InterPro" id="IPR013114">
    <property type="entry name" value="FabA_FabZ"/>
</dbReference>
<dbReference type="InterPro" id="IPR010084">
    <property type="entry name" value="FabZ"/>
</dbReference>
<dbReference type="InterPro" id="IPR029069">
    <property type="entry name" value="HotDog_dom_sf"/>
</dbReference>
<dbReference type="NCBIfam" id="TIGR01750">
    <property type="entry name" value="fabZ"/>
    <property type="match status" value="1"/>
</dbReference>
<dbReference type="NCBIfam" id="NF000582">
    <property type="entry name" value="PRK00006.1"/>
    <property type="match status" value="1"/>
</dbReference>
<dbReference type="PANTHER" id="PTHR30272">
    <property type="entry name" value="3-HYDROXYACYL-[ACYL-CARRIER-PROTEIN] DEHYDRATASE"/>
    <property type="match status" value="1"/>
</dbReference>
<dbReference type="PANTHER" id="PTHR30272:SF1">
    <property type="entry name" value="3-HYDROXYACYL-[ACYL-CARRIER-PROTEIN] DEHYDRATASE"/>
    <property type="match status" value="1"/>
</dbReference>
<dbReference type="Pfam" id="PF07977">
    <property type="entry name" value="FabA"/>
    <property type="match status" value="1"/>
</dbReference>
<dbReference type="SUPFAM" id="SSF54637">
    <property type="entry name" value="Thioesterase/thiol ester dehydrase-isomerase"/>
    <property type="match status" value="1"/>
</dbReference>
<accession>P64109</accession>
<accession>Q99SF9</accession>
<protein>
    <recommendedName>
        <fullName evidence="1">3-hydroxyacyl-[acyl-carrier-protein] dehydratase FabZ</fullName>
        <ecNumber evidence="1">4.2.1.59</ecNumber>
    </recommendedName>
    <alternativeName>
        <fullName evidence="1">(3R)-hydroxymyristoyl-[acyl-carrier-protein] dehydratase</fullName>
        <shortName evidence="1">(3R)-hydroxymyristoyl-ACP dehydrase</shortName>
    </alternativeName>
    <alternativeName>
        <fullName evidence="1">Beta-hydroxyacyl-ACP dehydratase</fullName>
    </alternativeName>
</protein>
<sequence length="146" mass="16082">METIFDYNQIKQIIPHRQPFLLIDKVVEYEEGQRCVAIKQVSGNEPFFQGHFPEYAVMPGVLITEALAQTGAVAILNSEENKGKIALFAGIDKCRFKRQVVPGDTLTLEVEITKIKGPIGKGNAKATVDGQLACSCELTFAIQDVK</sequence>